<name>LOVF_ASPTN</name>
<organism>
    <name type="scientific">Aspergillus terreus (strain NIH 2624 / FGSC A1156)</name>
    <dbReference type="NCBI Taxonomy" id="341663"/>
    <lineage>
        <taxon>Eukaryota</taxon>
        <taxon>Fungi</taxon>
        <taxon>Dikarya</taxon>
        <taxon>Ascomycota</taxon>
        <taxon>Pezizomycotina</taxon>
        <taxon>Eurotiomycetes</taxon>
        <taxon>Eurotiomycetidae</taxon>
        <taxon>Eurotiales</taxon>
        <taxon>Aspergillaceae</taxon>
        <taxon>Aspergillus</taxon>
        <taxon>Aspergillus subgen. Circumdati</taxon>
    </lineage>
</organism>
<feature type="chain" id="PRO_0000449662" description="Lovastatin diketide synthase lovF">
    <location>
        <begin position="1"/>
        <end position="2452"/>
    </location>
</feature>
<feature type="domain" description="Ketosynthase family 3 (KS3)" evidence="4">
    <location>
        <begin position="10"/>
        <end position="381"/>
    </location>
</feature>
<feature type="domain" description="PKS/mFAS DH" evidence="5">
    <location>
        <begin position="861"/>
        <end position="1171"/>
    </location>
</feature>
<feature type="domain" description="Carrier" evidence="3">
    <location>
        <begin position="2373"/>
        <end position="2450"/>
    </location>
</feature>
<feature type="region of interest" description="Malonyl-CoA:ACP transacylase (MAT) domain" evidence="1 2">
    <location>
        <begin position="496"/>
        <end position="790"/>
    </location>
</feature>
<feature type="region of interest" description="Dehydratase (DH) domain" evidence="1 2">
    <location>
        <begin position="861"/>
        <end position="1166"/>
    </location>
</feature>
<feature type="region of interest" description="N-terminal hotdog fold" evidence="5">
    <location>
        <begin position="861"/>
        <end position="998"/>
    </location>
</feature>
<feature type="region of interest" description="Disordered" evidence="7">
    <location>
        <begin position="997"/>
        <end position="1017"/>
    </location>
</feature>
<feature type="region of interest" description="C-terminal hotdog fold" evidence="5">
    <location>
        <begin position="1012"/>
        <end position="1171"/>
    </location>
</feature>
<feature type="region of interest" description="Methyltransferase (CMet) domain" evidence="1 2">
    <location>
        <begin position="1343"/>
        <end position="1528"/>
    </location>
</feature>
<feature type="region of interest" description="Enoylreductase (ER) domain" evidence="1 2">
    <location>
        <begin position="1745"/>
        <end position="2064"/>
    </location>
</feature>
<feature type="region of interest" description="Ketoreductase (KR) domain" evidence="1 2">
    <location>
        <begin position="2088"/>
        <end position="2260"/>
    </location>
</feature>
<feature type="active site" description="For beta-ketoacyl synthase activity" evidence="4">
    <location>
        <position position="173"/>
    </location>
</feature>
<feature type="active site" description="For beta-ketoacyl synthase activity" evidence="4">
    <location>
        <position position="308"/>
    </location>
</feature>
<feature type="active site" description="For beta-ketoacyl synthase activity" evidence="4">
    <location>
        <position position="343"/>
    </location>
</feature>
<feature type="active site" description="For malonyltransferase activity" evidence="6">
    <location>
        <position position="555"/>
    </location>
</feature>
<feature type="active site" description="Proton acceptor; for dehydratase activity" evidence="5">
    <location>
        <position position="893"/>
    </location>
</feature>
<feature type="active site" description="Proton donor; for dehydratase activity" evidence="5">
    <location>
        <position position="1079"/>
    </location>
</feature>
<feature type="modified residue" description="O-(pantetheine 4'-phosphoryl)serine" evidence="3">
    <location>
        <position position="2410"/>
    </location>
</feature>
<sequence length="2452" mass="268120">MTPLDAPGAPAPIAVVGMGCRFGGGATDPQKLWKLLEEGGSAWSKIPPSRFNVGGVYHPNGQRVGSCMDPQYRLILEVVYEALEAGMYYIPWFHTWVLTLHGSAAGIPLEQVSGSKTGVFAGTMYHDYQGSFQRQPEALPRYFITGNAGTMLANRVSHFYDLRGPSVSIDTACSTTLTALHLAIQSLRAGESDMAIVAGANLLLNPDVFTTMSNLGFLSPDGISYSFDSRADGYGRGEGVAAIVLKTLPHAVRDGDPIRLIVRETAINQDGRTLAISTPSGEAQERLIRDCYQKARLDPKQTSYVEAHGTGTGAGDPLELGVISAAFPRQQIQVGSVKANIGHTEAIPLSSQSWIPTDGVCRASINNFGFGGANAHAIVERYAPFAETSMCSPNGYPGNYDGHVETDQAHIYVLSAKDENSCMRMVSRLCDYATHAREADDWQLLANMAYTLGSRRSNFRWKAVCTAHNLTSLAQNLAGDGMRPSKSAEQVRLGWVFTGQGAQWFAMGQELSRPETESRVDQAEFSLPLSTALQIALVRLLWSWNIQPVAVTSHSSGEAAAAYAIGALTARSAIGISYIRGALTARDRLASVHKGAMLAVGLSRSEVGIYIRQVPLQSEECLVVGCINSPSSVTVSGDLSAIAKLEELLHADRIFARRLKVTQAFHSSHMNSMTDAFRAGLTELFGADPSDAANANKDVIYASPRTGDRMHDFNSLRDPMHWVECMLYPVEFESAFRQMCLDENDHMPKVDRIIEIGPHGALGGPIKQIMQLPELAPCDIPYLSCLSRGKSSLSTLRLLASELIRAGFPVDLNAINFPRGCEAARVQVLSDLPPYPWNHETRYWKEPRISQSARQRKGPVHDLIGLQEPLNLPLARSWHNVLRVSDLPWLRDHVVGSHIVFPGAGFVCMAVIGISTLCSSDHESADFSYILRDVNFAQALILPADGEEGIDLRLTICAPDQSLGSQDWQRFLVHSITADKNDWTEHCTGLVRVDMDQPASSLSNPQRADPRPWSRKTAPQDLWDSLHRVGIRHGPLFQNITRIESDGRESWCTFAIADTASAMPHAYESQHIVHPTTLDSAIQAAYTTLPFAGSRIKSAMVPARVGCMKISSRLADLEARDMLRAQAKMHSQSHCALVTDVAVFDEADPFGGPVMELEGLVFQSLGASLGTSGRDSTDTGNTCSSWHWAPDISLVNPVWLERTLDTGIQKHEIGVILELRRCSVHFIQEAMESLSVGDVARLSGHLAKFYAWMQAQLACAQNGELGPESSSWTRDNEHARCSLRSRVVAGSTNGEMICRLGSVLPAILRREVDPLEVMMDGHLLSRYYVDALKWSRSNAQASELVRLCCHKNPRARILEIGGGTGGCTQLVVDSLGPNPPVGRYDFTDVSAGFFEAARKRFAGWQDVMDFRKLDIEDDPEAQGFVCGSYDVVLACQVLHATSNMQRTLTNVRKLLKPGGKLILVETTRDELDLFFTFGLLPGWWLSEEPERQSTPSLSPTMWRSMLHATGFNGVEVEARDCDSDEFYMISTMMSTAVQATPTSCSDKLPEVLLVYVDSSTPMSWISDLQGAIRCRNCSVTSLQALRQVPPTEGQMCVFLGEMEHSMLGSVTNDDFTLLTSMLQLAGGALWVTRGATMKSDDPLKALHLGLLRTMRNESHGKRFVSLDLDPSRNPWTGDSRDAIVSVLDLVSMSDEKEFDYAERGGVIHVPRAFSDSINGGEEDGYALEPFQDSQHLLRLDIRTPGLLDSLYFRKRSVDPYEPDKLPDDWVEIEPRAFGLNFRDIMVAMGQLESNVMGFECAGVVTSLSETARTIAPGLAVGDRVCALMNGHWASRVTTSRTNVVRIPETLSFPHAASIPLAFTTAYISLYTVARILPGETVLIHAGAGGVGQAAIILAQLTGAEVFTTAGSEAKRNHLIDKFHLDPDHVFSSRDSSFVDGIKTRTSGKGVDVVLNSLAGPLLQKSFDCLARFGRFVEIGKKDLEQNSRLDMSTFVRNVSFSSVDILYWQQAKSAEIFQALSEVILLWGRTAIGLIHPISEYPMSALEKAFRTMQSGQHVGKIVVTVAPDDAVLVRQERMPLFLKPNVSYLVAGGLGGIGRRICEWLVDRGARYLIILSRTARVDPVVTSLQERGCTVSVQACDVADKSQLEAALQQCRAENLPPIRGVIQGAMVLKDALVSQMTADGFHAALRPKVQGSWNLHRIASDVDFFVMLSSLVGVMGGAGQANYAAAGAFQDALAEHRMAHNQPAVTIDLGMVQSIGYVAETDSAVAERLQRIGYQPLHEEEVLAVLEQAMSPVCSPTAPTRPAVIVTGINTRPGPHWAHADWMQEARFAGIKYRDPLRDNNGALPLTLAEDDNLHARLNRATSQQASIAVIMEAMGRKLISMFGLTDSEMSATQTLAGIGVDSLVAIELRNWITARFNVDISVFELMEGRTIAKVAEVVLQRYKP</sequence>
<evidence type="ECO:0000250" key="1">
    <source>
        <dbReference type="UniProtKB" id="Q9Y7D5"/>
    </source>
</evidence>
<evidence type="ECO:0000255" key="2"/>
<evidence type="ECO:0000255" key="3">
    <source>
        <dbReference type="PROSITE-ProRule" id="PRU00258"/>
    </source>
</evidence>
<evidence type="ECO:0000255" key="4">
    <source>
        <dbReference type="PROSITE-ProRule" id="PRU01348"/>
    </source>
</evidence>
<evidence type="ECO:0000255" key="5">
    <source>
        <dbReference type="PROSITE-ProRule" id="PRU01363"/>
    </source>
</evidence>
<evidence type="ECO:0000255" key="6">
    <source>
        <dbReference type="PROSITE-ProRule" id="PRU10022"/>
    </source>
</evidence>
<evidence type="ECO:0000256" key="7">
    <source>
        <dbReference type="SAM" id="MobiDB-lite"/>
    </source>
</evidence>
<evidence type="ECO:0000269" key="8">
    <source>
    </source>
</evidence>
<evidence type="ECO:0000269" key="9">
    <source>
    </source>
</evidence>
<evidence type="ECO:0000269" key="10">
    <source>
    </source>
</evidence>
<evidence type="ECO:0000269" key="11">
    <source>
    </source>
</evidence>
<evidence type="ECO:0000269" key="12">
    <source>
    </source>
</evidence>
<evidence type="ECO:0000269" key="13">
    <source>
    </source>
</evidence>
<evidence type="ECO:0000269" key="14">
    <source>
    </source>
</evidence>
<evidence type="ECO:0000269" key="15">
    <source>
    </source>
</evidence>
<evidence type="ECO:0000269" key="16">
    <source>
    </source>
</evidence>
<evidence type="ECO:0000269" key="17">
    <source>
    </source>
</evidence>
<evidence type="ECO:0000269" key="18">
    <source>
    </source>
</evidence>
<evidence type="ECO:0000269" key="19">
    <source>
    </source>
</evidence>
<evidence type="ECO:0000269" key="20">
    <source>
    </source>
</evidence>
<evidence type="ECO:0000269" key="21">
    <source>
    </source>
</evidence>
<evidence type="ECO:0000269" key="22">
    <source>
    </source>
</evidence>
<evidence type="ECO:0000269" key="23">
    <source>
    </source>
</evidence>
<evidence type="ECO:0000303" key="24">
    <source>
    </source>
</evidence>
<evidence type="ECO:0000305" key="25">
    <source>
    </source>
</evidence>
<evidence type="ECO:0000305" key="26">
    <source>
    </source>
</evidence>
<protein>
    <recommendedName>
        <fullName evidence="24">Lovastatin diketide synthase lovF</fullName>
        <shortName evidence="24">LDKS</shortName>
        <ecNumber evidence="13 16">2.3.1.244</ecNumber>
    </recommendedName>
    <alternativeName>
        <fullName evidence="24">Lovastatin biosynthesis cluster protein F</fullName>
    </alternativeName>
</protein>
<dbReference type="EC" id="2.3.1.244" evidence="13 16"/>
<dbReference type="EMBL" id="CH476609">
    <property type="protein sequence ID" value="EAU29417.1"/>
    <property type="molecule type" value="Genomic_DNA"/>
</dbReference>
<dbReference type="RefSeq" id="XP_001209270.1">
    <property type="nucleotide sequence ID" value="XM_001209270.1"/>
</dbReference>
<dbReference type="SMR" id="Q0C8L6"/>
<dbReference type="STRING" id="341663.Q0C8L6"/>
<dbReference type="EnsemblFungi" id="EAU29417">
    <property type="protein sequence ID" value="EAU29417"/>
    <property type="gene ID" value="ATEG_09968"/>
</dbReference>
<dbReference type="GeneID" id="4319643"/>
<dbReference type="VEuPathDB" id="FungiDB:ATEG_09968"/>
<dbReference type="eggNOG" id="KOG1202">
    <property type="taxonomic scope" value="Eukaryota"/>
</dbReference>
<dbReference type="HOGENOM" id="CLU_000022_31_0_1"/>
<dbReference type="OMA" id="VHFIQEA"/>
<dbReference type="OrthoDB" id="329835at2759"/>
<dbReference type="UniPathway" id="UPA00875"/>
<dbReference type="Proteomes" id="UP000007963">
    <property type="component" value="Unassembled WGS sequence"/>
</dbReference>
<dbReference type="GO" id="GO:0004315">
    <property type="term" value="F:3-oxoacyl-[acyl-carrier-protein] synthase activity"/>
    <property type="evidence" value="ECO:0007669"/>
    <property type="project" value="InterPro"/>
</dbReference>
<dbReference type="GO" id="GO:0004312">
    <property type="term" value="F:fatty acid synthase activity"/>
    <property type="evidence" value="ECO:0007669"/>
    <property type="project" value="TreeGrafter"/>
</dbReference>
<dbReference type="GO" id="GO:0008168">
    <property type="term" value="F:methyltransferase activity"/>
    <property type="evidence" value="ECO:0007669"/>
    <property type="project" value="UniProtKB-KW"/>
</dbReference>
<dbReference type="GO" id="GO:0016491">
    <property type="term" value="F:oxidoreductase activity"/>
    <property type="evidence" value="ECO:0007669"/>
    <property type="project" value="UniProtKB-KW"/>
</dbReference>
<dbReference type="GO" id="GO:0031177">
    <property type="term" value="F:phosphopantetheine binding"/>
    <property type="evidence" value="ECO:0007669"/>
    <property type="project" value="InterPro"/>
</dbReference>
<dbReference type="GO" id="GO:0006633">
    <property type="term" value="P:fatty acid biosynthetic process"/>
    <property type="evidence" value="ECO:0007669"/>
    <property type="project" value="InterPro"/>
</dbReference>
<dbReference type="GO" id="GO:0140735">
    <property type="term" value="P:lovastatin biosynthetic process"/>
    <property type="evidence" value="ECO:0000314"/>
    <property type="project" value="GO_Central"/>
</dbReference>
<dbReference type="GO" id="GO:0032259">
    <property type="term" value="P:methylation"/>
    <property type="evidence" value="ECO:0007669"/>
    <property type="project" value="UniProtKB-KW"/>
</dbReference>
<dbReference type="CDD" id="cd02440">
    <property type="entry name" value="AdoMet_MTases"/>
    <property type="match status" value="1"/>
</dbReference>
<dbReference type="CDD" id="cd05195">
    <property type="entry name" value="enoyl_red"/>
    <property type="match status" value="1"/>
</dbReference>
<dbReference type="CDD" id="cd00833">
    <property type="entry name" value="PKS"/>
    <property type="match status" value="1"/>
</dbReference>
<dbReference type="FunFam" id="3.40.50.150:FF:000652">
    <property type="entry name" value="Lovastatin nonaketide synthase, polyketide synthase component"/>
    <property type="match status" value="1"/>
</dbReference>
<dbReference type="FunFam" id="3.40.50.720:FF:000209">
    <property type="entry name" value="Polyketide synthase Pks12"/>
    <property type="match status" value="1"/>
</dbReference>
<dbReference type="Gene3D" id="3.30.70.3290">
    <property type="match status" value="2"/>
</dbReference>
<dbReference type="Gene3D" id="3.40.47.10">
    <property type="match status" value="2"/>
</dbReference>
<dbReference type="Gene3D" id="1.10.1200.10">
    <property type="entry name" value="ACP-like"/>
    <property type="match status" value="1"/>
</dbReference>
<dbReference type="Gene3D" id="3.40.366.10">
    <property type="entry name" value="Malonyl-Coenzyme A Acyl Carrier Protein, domain 2"/>
    <property type="match status" value="2"/>
</dbReference>
<dbReference type="Gene3D" id="3.90.180.10">
    <property type="entry name" value="Medium-chain alcohol dehydrogenases, catalytic domain"/>
    <property type="match status" value="1"/>
</dbReference>
<dbReference type="Gene3D" id="3.40.50.720">
    <property type="entry name" value="NAD(P)-binding Rossmann-like Domain"/>
    <property type="match status" value="1"/>
</dbReference>
<dbReference type="Gene3D" id="3.10.129.110">
    <property type="entry name" value="Polyketide synthase dehydratase"/>
    <property type="match status" value="1"/>
</dbReference>
<dbReference type="Gene3D" id="3.40.50.150">
    <property type="entry name" value="Vaccinia Virus protein VP39"/>
    <property type="match status" value="1"/>
</dbReference>
<dbReference type="InterPro" id="IPR001227">
    <property type="entry name" value="Ac_transferase_dom_sf"/>
</dbReference>
<dbReference type="InterPro" id="IPR036736">
    <property type="entry name" value="ACP-like_sf"/>
</dbReference>
<dbReference type="InterPro" id="IPR014043">
    <property type="entry name" value="Acyl_transferase_dom"/>
</dbReference>
<dbReference type="InterPro" id="IPR016035">
    <property type="entry name" value="Acyl_Trfase/lysoPLipase"/>
</dbReference>
<dbReference type="InterPro" id="IPR013154">
    <property type="entry name" value="ADH-like_N"/>
</dbReference>
<dbReference type="InterPro" id="IPR011032">
    <property type="entry name" value="GroES-like_sf"/>
</dbReference>
<dbReference type="InterPro" id="IPR018201">
    <property type="entry name" value="Ketoacyl_synth_AS"/>
</dbReference>
<dbReference type="InterPro" id="IPR014031">
    <property type="entry name" value="Ketoacyl_synth_C"/>
</dbReference>
<dbReference type="InterPro" id="IPR014030">
    <property type="entry name" value="Ketoacyl_synth_N"/>
</dbReference>
<dbReference type="InterPro" id="IPR016036">
    <property type="entry name" value="Malonyl_transacylase_ACP-bd"/>
</dbReference>
<dbReference type="InterPro" id="IPR013217">
    <property type="entry name" value="Methyltransf_12"/>
</dbReference>
<dbReference type="InterPro" id="IPR036291">
    <property type="entry name" value="NAD(P)-bd_dom_sf"/>
</dbReference>
<dbReference type="InterPro" id="IPR056501">
    <property type="entry name" value="NAD-bd_HRPKS_sdrA"/>
</dbReference>
<dbReference type="InterPro" id="IPR020841">
    <property type="entry name" value="PKS_Beta-ketoAc_synthase_dom"/>
</dbReference>
<dbReference type="InterPro" id="IPR042104">
    <property type="entry name" value="PKS_dehydratase_sf"/>
</dbReference>
<dbReference type="InterPro" id="IPR020807">
    <property type="entry name" value="PKS_DH"/>
</dbReference>
<dbReference type="InterPro" id="IPR049551">
    <property type="entry name" value="PKS_DH_C"/>
</dbReference>
<dbReference type="InterPro" id="IPR049552">
    <property type="entry name" value="PKS_DH_N"/>
</dbReference>
<dbReference type="InterPro" id="IPR020843">
    <property type="entry name" value="PKS_ER"/>
</dbReference>
<dbReference type="InterPro" id="IPR013968">
    <property type="entry name" value="PKS_KR"/>
</dbReference>
<dbReference type="InterPro" id="IPR049900">
    <property type="entry name" value="PKS_mFAS_DH"/>
</dbReference>
<dbReference type="InterPro" id="IPR050091">
    <property type="entry name" value="PKS_NRPS_Biosynth_Enz"/>
</dbReference>
<dbReference type="InterPro" id="IPR020806">
    <property type="entry name" value="PKS_PP-bd"/>
</dbReference>
<dbReference type="InterPro" id="IPR009081">
    <property type="entry name" value="PP-bd_ACP"/>
</dbReference>
<dbReference type="InterPro" id="IPR006162">
    <property type="entry name" value="Ppantetheine_attach_site"/>
</dbReference>
<dbReference type="InterPro" id="IPR029063">
    <property type="entry name" value="SAM-dependent_MTases_sf"/>
</dbReference>
<dbReference type="InterPro" id="IPR016039">
    <property type="entry name" value="Thiolase-like"/>
</dbReference>
<dbReference type="PANTHER" id="PTHR43775:SF29">
    <property type="entry name" value="ASPERFURANONE POLYKETIDE SYNTHASE AFOG-RELATED"/>
    <property type="match status" value="1"/>
</dbReference>
<dbReference type="PANTHER" id="PTHR43775">
    <property type="entry name" value="FATTY ACID SYNTHASE"/>
    <property type="match status" value="1"/>
</dbReference>
<dbReference type="Pfam" id="PF00698">
    <property type="entry name" value="Acyl_transf_1"/>
    <property type="match status" value="1"/>
</dbReference>
<dbReference type="Pfam" id="PF08240">
    <property type="entry name" value="ADH_N"/>
    <property type="match status" value="1"/>
</dbReference>
<dbReference type="Pfam" id="PF13602">
    <property type="entry name" value="ADH_zinc_N_2"/>
    <property type="match status" value="1"/>
</dbReference>
<dbReference type="Pfam" id="PF22621">
    <property type="entry name" value="CurL-like_PKS_C"/>
    <property type="match status" value="1"/>
</dbReference>
<dbReference type="Pfam" id="PF00109">
    <property type="entry name" value="ketoacyl-synt"/>
    <property type="match status" value="2"/>
</dbReference>
<dbReference type="Pfam" id="PF02801">
    <property type="entry name" value="Ketoacyl-synt_C"/>
    <property type="match status" value="1"/>
</dbReference>
<dbReference type="Pfam" id="PF08659">
    <property type="entry name" value="KR"/>
    <property type="match status" value="1"/>
</dbReference>
<dbReference type="Pfam" id="PF08242">
    <property type="entry name" value="Methyltransf_12"/>
    <property type="match status" value="1"/>
</dbReference>
<dbReference type="Pfam" id="PF23114">
    <property type="entry name" value="NAD-bd_HRPKS_sdrA"/>
    <property type="match status" value="1"/>
</dbReference>
<dbReference type="Pfam" id="PF21089">
    <property type="entry name" value="PKS_DH_N"/>
    <property type="match status" value="1"/>
</dbReference>
<dbReference type="Pfam" id="PF00550">
    <property type="entry name" value="PP-binding"/>
    <property type="match status" value="1"/>
</dbReference>
<dbReference type="Pfam" id="PF14765">
    <property type="entry name" value="PS-DH"/>
    <property type="match status" value="1"/>
</dbReference>
<dbReference type="SMART" id="SM00827">
    <property type="entry name" value="PKS_AT"/>
    <property type="match status" value="1"/>
</dbReference>
<dbReference type="SMART" id="SM00826">
    <property type="entry name" value="PKS_DH"/>
    <property type="match status" value="1"/>
</dbReference>
<dbReference type="SMART" id="SM00829">
    <property type="entry name" value="PKS_ER"/>
    <property type="match status" value="1"/>
</dbReference>
<dbReference type="SMART" id="SM00822">
    <property type="entry name" value="PKS_KR"/>
    <property type="match status" value="1"/>
</dbReference>
<dbReference type="SMART" id="SM00825">
    <property type="entry name" value="PKS_KS"/>
    <property type="match status" value="1"/>
</dbReference>
<dbReference type="SMART" id="SM00823">
    <property type="entry name" value="PKS_PP"/>
    <property type="match status" value="1"/>
</dbReference>
<dbReference type="SUPFAM" id="SSF47336">
    <property type="entry name" value="ACP-like"/>
    <property type="match status" value="1"/>
</dbReference>
<dbReference type="SUPFAM" id="SSF52151">
    <property type="entry name" value="FabD/lysophospholipase-like"/>
    <property type="match status" value="1"/>
</dbReference>
<dbReference type="SUPFAM" id="SSF50129">
    <property type="entry name" value="GroES-like"/>
    <property type="match status" value="1"/>
</dbReference>
<dbReference type="SUPFAM" id="SSF51735">
    <property type="entry name" value="NAD(P)-binding Rossmann-fold domains"/>
    <property type="match status" value="2"/>
</dbReference>
<dbReference type="SUPFAM" id="SSF55048">
    <property type="entry name" value="Probable ACP-binding domain of malonyl-CoA ACP transacylase"/>
    <property type="match status" value="1"/>
</dbReference>
<dbReference type="SUPFAM" id="SSF53335">
    <property type="entry name" value="S-adenosyl-L-methionine-dependent methyltransferases"/>
    <property type="match status" value="1"/>
</dbReference>
<dbReference type="SUPFAM" id="SSF53901">
    <property type="entry name" value="Thiolase-like"/>
    <property type="match status" value="1"/>
</dbReference>
<dbReference type="PROSITE" id="PS50075">
    <property type="entry name" value="CARRIER"/>
    <property type="match status" value="1"/>
</dbReference>
<dbReference type="PROSITE" id="PS00606">
    <property type="entry name" value="KS3_1"/>
    <property type="match status" value="1"/>
</dbReference>
<dbReference type="PROSITE" id="PS52004">
    <property type="entry name" value="KS3_2"/>
    <property type="match status" value="1"/>
</dbReference>
<dbReference type="PROSITE" id="PS00012">
    <property type="entry name" value="PHOSPHOPANTETHEINE"/>
    <property type="match status" value="1"/>
</dbReference>
<dbReference type="PROSITE" id="PS52019">
    <property type="entry name" value="PKS_MFAS_DH"/>
    <property type="match status" value="1"/>
</dbReference>
<keyword id="KW-0012">Acyltransferase</keyword>
<keyword id="KW-0489">Methyltransferase</keyword>
<keyword id="KW-0511">Multifunctional enzyme</keyword>
<keyword id="KW-0521">NADP</keyword>
<keyword id="KW-0560">Oxidoreductase</keyword>
<keyword id="KW-0596">Phosphopantetheine</keyword>
<keyword id="KW-0597">Phosphoprotein</keyword>
<keyword id="KW-1185">Reference proteome</keyword>
<keyword id="KW-0949">S-adenosyl-L-methionine</keyword>
<keyword id="KW-0808">Transferase</keyword>
<accession>Q0C8L6</accession>
<comment type="function">
    <text evidence="8 9 10 11 12 13 14 15 16 17 18 19 20">Lovastatin diketide synthase; part of the gene cluster that mediates the biosynthesis of lovastatin (also known as mevinolin, mevacor or monacolin K), a hypolipidemic inhibitor of (3S)-hydroxymethylglutaryl-coenzyme A (HMG-CoA) reductase (HMGR) (PubMed:10334994, PubMed:12929390, PubMed:21495633). The first step in the biosynthesis of lovastatin is the production of dihydromonacolin L acid by the lovastatin nonaketide synthase lovB and the trans-acting enoyl reductase lovC via condensation of one acetyl-CoA unit and 8 malonyl-CoA units (PubMed:10334994, PubMed:10381407, PubMed:19900898, PubMed:22733743). Dihydromonacolin L acid is released from lovB by the thioesterase lovG (PubMed:23653178). Next, dihydromonacolin L acid is oxidized by the dihydromonacolin L monooxygenase lovA twice to form monacolin J acid (PubMed:12929390, PubMed:21495633). The 2-methylbutyrate moiety of lovastatin is synthesized by the lovastatin diketide synthase lovF via condensation of one acetyl-CoA unit and one malonyl-CoA unit (PubMed:19530726, PubMed:21069965). Finally, the covalent attachment of this moiety to monacolin J acid is catalyzed by the transesterase lovD to yield lovastatin (PubMed:10334994, PubMed:17113998, PubMed:18988191, PubMed:19875080, PubMed:24727900). LovD has broad substrate specificity and can also convert monacolin J to simvastatin using alpha-dimethylbutanoyl-S-methyl-3-mercaptopropionate (DMB-S-MMP) as the thioester acyl donor, and can also catalyze the reverse reaction and function as hydrolase in vitro (PubMed:19875080). LovD has much higher activity with LovF-bound 2-methylbutanoate than with free diketide substrates (PubMed:21069965).</text>
</comment>
<comment type="catalytic activity">
    <reaction evidence="13 16">
        <text>holo-[2-methylbutanoate polyketide synthase] + 2 malonyl-CoA + S-adenosyl-L-methionine + 2 NADPH + 3 H(+) = (S)-2-methylbutanoyl-[2-methylbutanoate polyketide synthase] + S-adenosyl-L-homocysteine + 2 CO2 + 2 NADP(+) + 2 CoA + H2O</text>
        <dbReference type="Rhea" id="RHEA:42852"/>
        <dbReference type="Rhea" id="RHEA-COMP:10260"/>
        <dbReference type="Rhea" id="RHEA-COMP:10261"/>
        <dbReference type="ChEBI" id="CHEBI:15377"/>
        <dbReference type="ChEBI" id="CHEBI:15378"/>
        <dbReference type="ChEBI" id="CHEBI:16526"/>
        <dbReference type="ChEBI" id="CHEBI:57287"/>
        <dbReference type="ChEBI" id="CHEBI:57384"/>
        <dbReference type="ChEBI" id="CHEBI:57783"/>
        <dbReference type="ChEBI" id="CHEBI:57856"/>
        <dbReference type="ChEBI" id="CHEBI:58349"/>
        <dbReference type="ChEBI" id="CHEBI:59789"/>
        <dbReference type="ChEBI" id="CHEBI:64479"/>
        <dbReference type="ChEBI" id="CHEBI:82764"/>
        <dbReference type="EC" id="2.3.1.244"/>
    </reaction>
</comment>
<comment type="cofactor">
    <cofactor evidence="13 16">
        <name>pantetheine 4'-phosphate</name>
        <dbReference type="ChEBI" id="CHEBI:47942"/>
    </cofactor>
    <text evidence="13 16">Binds 1 phosphopantetheine covalently.</text>
</comment>
<comment type="pathway">
    <text evidence="8 13 16">Polyketide biosynthesis; lovastatin biosynthesis.</text>
</comment>
<comment type="subunit">
    <text evidence="13">Interacts with LovD.</text>
</comment>
<comment type="domain">
    <text evidence="25 26">Multidomain protein; including a ketosynthase (KS) that catalyzes repeated decarboxylative condensation to elongate the polyketide backbone; a malonyl-CoA:ACP transacylase (MAT) that selects and transfers the extender unit malonyl-CoA; a dehydratase (DH) domain that reduces hydroxyl groups to enoyl groups; a methyltransferase (CMeT) domain responsible for the incorporation of methyl groups; an enoylreductase (ER) domain that reduces enoyl groups to alkyl group; a ketoreductase (KR) domain that catalyzes beta-ketoreduction steps; and an acyl-carrier protein (ACP) that serves as the tether of the growing and completed polyketide via its phosphopantetheinyl arm.</text>
</comment>
<comment type="disruption phenotype">
    <text evidence="8">Loss of lovastatin biosynthesis.</text>
</comment>
<comment type="biotechnology">
    <text evidence="21 22 23">Lovastatin acts as a hypolipidemic agent that works as inhibitor of (3S)-hydroxymethylglutaryl-coenzyme A (HMG-CoA) reductase (HMGR) which reduces HMG-CoA to mevalonate and is the key step in cholesterol biosynthesis (PubMed:6933445). Lovastatin, simvastatin and related compounds are widely used to treat hypercholesteremia and reduce the risk of cardiovascular disease (PubMed:6933445). Furthermore, statins such as lovastatin were found to be anticancer agents (PubMed:29236027, PubMed:29932104).</text>
</comment>
<proteinExistence type="evidence at protein level"/>
<reference key="1">
    <citation type="submission" date="2005-09" db="EMBL/GenBank/DDBJ databases">
        <title>Annotation of the Aspergillus terreus NIH2624 genome.</title>
        <authorList>
            <person name="Birren B.W."/>
            <person name="Lander E.S."/>
            <person name="Galagan J.E."/>
            <person name="Nusbaum C."/>
            <person name="Devon K."/>
            <person name="Henn M."/>
            <person name="Ma L.-J."/>
            <person name="Jaffe D.B."/>
            <person name="Butler J."/>
            <person name="Alvarez P."/>
            <person name="Gnerre S."/>
            <person name="Grabherr M."/>
            <person name="Kleber M."/>
            <person name="Mauceli E.W."/>
            <person name="Brockman W."/>
            <person name="Rounsley S."/>
            <person name="Young S.K."/>
            <person name="LaButti K."/>
            <person name="Pushparaj V."/>
            <person name="DeCaprio D."/>
            <person name="Crawford M."/>
            <person name="Koehrsen M."/>
            <person name="Engels R."/>
            <person name="Montgomery P."/>
            <person name="Pearson M."/>
            <person name="Howarth C."/>
            <person name="Larson L."/>
            <person name="Luoma S."/>
            <person name="White J."/>
            <person name="Alvarado L."/>
            <person name="Kodira C.D."/>
            <person name="Zeng Q."/>
            <person name="Oleary S."/>
            <person name="Yandava C."/>
            <person name="Denning D.W."/>
            <person name="Nierman W.C."/>
            <person name="Milne T."/>
            <person name="Madden K."/>
        </authorList>
    </citation>
    <scope>NUCLEOTIDE SEQUENCE [LARGE SCALE GENOMIC DNA]</scope>
    <source>
        <strain>NIH 2624 / FGSC A1156</strain>
    </source>
</reference>
<reference key="2">
    <citation type="journal article" date="1980" name="Proc. Natl. Acad. Sci. U.S.A.">
        <title>Mevinolin: a highly potent competitive inhibitor of hydroxymethylglutaryl-coenzyme A reductase and a cholesterol-lowering agent.</title>
        <authorList>
            <person name="Alberts A.W."/>
            <person name="Chen J."/>
            <person name="Kuron G."/>
            <person name="Hunt V."/>
            <person name="Huff J."/>
            <person name="Hoffman C."/>
            <person name="Rothrock J."/>
            <person name="Lopez M."/>
            <person name="Joshua H."/>
            <person name="Harris E."/>
            <person name="Patchett A."/>
            <person name="Monaghan R."/>
            <person name="Currie S."/>
            <person name="Stapley E."/>
            <person name="Albers-Schonberg G."/>
            <person name="Hensens O."/>
            <person name="Hirshfield J."/>
            <person name="Hoogsteen K."/>
            <person name="Liesch J."/>
            <person name="Springer J."/>
        </authorList>
    </citation>
    <scope>BIOTECHNOLOGY</scope>
</reference>
<reference key="3">
    <citation type="journal article" date="1999" name="Chem. Biol.">
        <title>Lovastatin biosynthesis in Aspergillus terreus: characterization of blocked mutants, enzyme activities and a multifunctional polyketide synthase gene.</title>
        <authorList>
            <person name="Hendrickson L."/>
            <person name="Davis C.R."/>
            <person name="Roach C."/>
            <person name="Nguyen D.K."/>
            <person name="Aldrich T."/>
            <person name="McAda P.C."/>
            <person name="Reeves C.D."/>
        </authorList>
    </citation>
    <scope>FUNCTION</scope>
</reference>
<reference key="4">
    <citation type="journal article" date="1999" name="Science">
        <title>Modulation of polyketide synthase activity by accessory proteins during lovastatin biosynthesis.</title>
        <authorList>
            <person name="Kennedy J."/>
            <person name="Auclair K."/>
            <person name="Kendrew S.G."/>
            <person name="Park C."/>
            <person name="Vederas J.C."/>
            <person name="Hutchinson C.R."/>
        </authorList>
    </citation>
    <scope>FUNCTION</scope>
    <scope>DISRUPTION PHENOTYPE</scope>
    <scope>PATHWAY</scope>
</reference>
<reference key="5">
    <citation type="journal article" date="2003" name="Org. Biomol. Chem.">
        <title>Transformations of cyclic nonaketides by Aspergillus terreus mutants blocked for lovastatin biosynthesis at the lovA and lovC genes.</title>
        <authorList>
            <person name="Sorensen J.L."/>
            <person name="Auclair K."/>
            <person name="Kennedy J."/>
            <person name="Hutchinson C.R."/>
            <person name="Vederas J.C."/>
        </authorList>
    </citation>
    <scope>FUNCTION</scope>
</reference>
<reference key="6">
    <citation type="journal article" date="2006" name="Chem. Biol.">
        <title>Biosynthesis of lovastatin analogs with a broadly specific acyltransferase.</title>
        <authorList>
            <person name="Xie X."/>
            <person name="Watanabe K."/>
            <person name="Wojcicki W.A."/>
            <person name="Wang C.C."/>
            <person name="Tang Y."/>
        </authorList>
    </citation>
    <scope>FUNCTION</scope>
</reference>
<reference key="7">
    <citation type="journal article" date="2009" name="Biotechnol. Bioeng.">
        <title>Rational improvement of simvastatin synthase solubility in Escherichia coli leads to higher whole-cell biocatalytic activity.</title>
        <authorList>
            <person name="Xie X."/>
            <person name="Pashkov I."/>
            <person name="Gao X."/>
            <person name="Guerrero J.L."/>
            <person name="Yeates T.O."/>
            <person name="Tang Y."/>
        </authorList>
    </citation>
    <scope>FUNCTION</scope>
</reference>
<reference key="8">
    <citation type="journal article" date="2009" name="Chem. Biol.">
        <title>Directed evolution and structural characterization of a simvastatin synthase.</title>
        <authorList>
            <person name="Gao X."/>
            <person name="Xie X."/>
            <person name="Pashkov I."/>
            <person name="Sawaya M.R."/>
            <person name="Laidman J."/>
            <person name="Zhang W."/>
            <person name="Cacho R."/>
            <person name="Yeates T.O."/>
            <person name="Tang Y."/>
        </authorList>
    </citation>
    <scope>FUNCTION</scope>
</reference>
<reference key="9">
    <citation type="journal article" date="2009" name="J. Am. Chem. Soc.">
        <title>Acyltransferase mediated polyketide release from a fungal megasynthase.</title>
        <authorList>
            <person name="Xie X."/>
            <person name="Meehan M.J."/>
            <person name="Xu W."/>
            <person name="Dorrestein P.C."/>
            <person name="Tang Y."/>
        </authorList>
    </citation>
    <scope>FUNCTION</scope>
    <scope>CATALYTIC ACTIVITY</scope>
    <scope>INTERACTION WITH LOVD</scope>
    <scope>COFACTOR</scope>
    <scope>IDENTIFICATION BY MASS SPECTROMETRY</scope>
    <scope>PATHWAY</scope>
    <scope>BIOTECHNOLOGY</scope>
    <scope>DOMAIN</scope>
</reference>
<reference key="10">
    <citation type="journal article" date="2009" name="Science">
        <title>Complete reconstitution of a highly reducing iterative polyketide synthase.</title>
        <authorList>
            <person name="Ma S.M."/>
            <person name="Li J.W."/>
            <person name="Choi J.W."/>
            <person name="Zhou H."/>
            <person name="Lee K.K."/>
            <person name="Moorthie V.A."/>
            <person name="Xie X."/>
            <person name="Kealey J.T."/>
            <person name="Da Silva N.A."/>
            <person name="Vederas J.C."/>
            <person name="Tang Y."/>
        </authorList>
    </citation>
    <scope>FUNCTION</scope>
</reference>
<reference key="11">
    <citation type="journal article" date="2011" name="Biochemistry">
        <title>FT-ICR-MS characterization of intermediates in the biosynthesis of the alpha-methylbutyrate side chain of lovastatin by the 277 kDa polyketide synthase LovF.</title>
        <authorList>
            <person name="Meehan M.J."/>
            <person name="Xie X."/>
            <person name="Zhao X."/>
            <person name="Xu W."/>
            <person name="Tang Y."/>
            <person name="Dorrestein P.C."/>
        </authorList>
    </citation>
    <scope>FUNCTION</scope>
    <scope>CATALYTIC ACTIVITY</scope>
    <scope>PATHWAY</scope>
    <scope>COFACTOR</scope>
    <scope>PHOSPHOPANTETHEINE AT SER-2490</scope>
    <scope>IDENTIFICATION BY MASS SPECTROMETRY</scope>
    <scope>DOMAIN</scope>
</reference>
<reference key="12">
    <citation type="journal article" date="2011" name="J. Am. Chem. Soc.">
        <title>Double oxidation of the cyclic nonaketide dihydromonacolin L to monacolin J by a single cytochrome P450 monooxygenase, LovA.</title>
        <authorList>
            <person name="Barriuso J."/>
            <person name="Nguyen D.T."/>
            <person name="Li J.W."/>
            <person name="Roberts J.N."/>
            <person name="MacNevin G."/>
            <person name="Chaytor J.L."/>
            <person name="Marcus S.L."/>
            <person name="Vederas J.C."/>
            <person name="Ro D.K."/>
        </authorList>
    </citation>
    <scope>FUNCTION</scope>
</reference>
<reference key="13">
    <citation type="journal article" date="2012" name="Proc. Natl. Acad. Sci. U.S.A.">
        <title>Crystal structure and biochemical studies of the trans-acting polyketide enoyl reductase LovC from lovastatin biosynthesis.</title>
        <authorList>
            <person name="Ames B.D."/>
            <person name="Nguyen C."/>
            <person name="Bruegger J."/>
            <person name="Smith P."/>
            <person name="Xu W."/>
            <person name="Ma S."/>
            <person name="Wong E."/>
            <person name="Wong S."/>
            <person name="Xie X."/>
            <person name="Li J.W."/>
            <person name="Vederas J.C."/>
            <person name="Tang Y."/>
            <person name="Tsai S.C."/>
        </authorList>
    </citation>
    <scope>FUNCTION</scope>
</reference>
<reference key="14">
    <citation type="journal article" date="2013" name="Angew. Chem. Int. Ed. Engl.">
        <title>LovG: the thioesterase required for dihydromonacolin L release and lovastatin nonaketide synthase turnover in lovastatin biosynthesis.</title>
        <authorList>
            <person name="Xu W."/>
            <person name="Chooi Y.H."/>
            <person name="Choi J.W."/>
            <person name="Li S."/>
            <person name="Vederas J.C."/>
            <person name="Da Silva N.A."/>
            <person name="Tang Y."/>
        </authorList>
    </citation>
    <scope>FUNCTION</scope>
</reference>
<reference key="15">
    <citation type="journal article" date="2014" name="Nat. Chem. Biol.">
        <title>The role of distant mutations and allosteric regulation on LovD active site dynamics.</title>
        <authorList>
            <person name="Jimenez-Oses G."/>
            <person name="Osuna S."/>
            <person name="Gao X."/>
            <person name="Sawaya M.R."/>
            <person name="Gilson L."/>
            <person name="Collier S.J."/>
            <person name="Huisman G.W."/>
            <person name="Yeates T.O."/>
            <person name="Tang Y."/>
            <person name="Houk K.N."/>
        </authorList>
    </citation>
    <scope>FUNCTION</scope>
</reference>
<reference key="16">
    <citation type="journal article" date="2017" name="Int. J. Mol. Sci.">
        <title>Simvastatin inhibits cell proliferation and migration in human anaplastic thyroid cancer.</title>
        <authorList>
            <person name="Chen M.C."/>
            <person name="Tsai Y.C."/>
            <person name="Tseng J.H."/>
            <person name="Liou J.J."/>
            <person name="Horng S."/>
            <person name="Wen H.C."/>
            <person name="Fan Y.C."/>
            <person name="Zhong W.B."/>
            <person name="Hsu S.P."/>
        </authorList>
    </citation>
    <scope>BIOTECHNOLOGY</scope>
</reference>
<reference key="17">
    <citation type="journal article" date="2018" name="Int. J. Mol. Sci.">
        <title>A synergistic anti-cancer effect of troglitazone and lovastatin in a human anaplastic thyroid cancer cell line and in a mouse xenograft model.</title>
        <authorList>
            <person name="Zhong W.B."/>
            <person name="Tsai Y.C."/>
            <person name="Chin L.H."/>
            <person name="Tseng J.H."/>
            <person name="Tang L.W."/>
            <person name="Horng S."/>
            <person name="Fan Y.C."/>
            <person name="Hsu S.P."/>
        </authorList>
    </citation>
    <scope>BIOTECHNOLOGY</scope>
</reference>
<gene>
    <name evidence="24" type="primary">lovF</name>
    <name type="ORF">ATEG_09968</name>
</gene>